<keyword id="KW-0165">Cleavage on pair of basic residues</keyword>
<keyword id="KW-0903">Direct protein sequencing</keyword>
<keyword id="KW-1015">Disulfide bond</keyword>
<keyword id="KW-0325">Glycoprotein</keyword>
<keyword id="KW-0339">Growth factor</keyword>
<keyword id="KW-0446">Lipid-binding</keyword>
<keyword id="KW-0481">Metalloenzyme inhibitor</keyword>
<keyword id="KW-0483">Metalloprotease inhibitor</keyword>
<keyword id="KW-0646">Protease inhibitor</keyword>
<keyword id="KW-0964">Secreted</keyword>
<keyword id="KW-0732">Signal</keyword>
<keyword id="KW-0800">Toxin</keyword>
<organism>
    <name type="scientific">Naja sputatrix</name>
    <name type="common">Malayan spitting cobra</name>
    <name type="synonym">Naja naja sputatrix</name>
    <dbReference type="NCBI Taxonomy" id="33626"/>
    <lineage>
        <taxon>Eukaryota</taxon>
        <taxon>Metazoa</taxon>
        <taxon>Chordata</taxon>
        <taxon>Craniata</taxon>
        <taxon>Vertebrata</taxon>
        <taxon>Euteleostomi</taxon>
        <taxon>Lepidosauria</taxon>
        <taxon>Squamata</taxon>
        <taxon>Bifurcata</taxon>
        <taxon>Unidentata</taxon>
        <taxon>Episquamata</taxon>
        <taxon>Toxicofera</taxon>
        <taxon>Serpentes</taxon>
        <taxon>Colubroidea</taxon>
        <taxon>Elapidae</taxon>
        <taxon>Elapinae</taxon>
        <taxon>Naja</taxon>
    </lineage>
</organism>
<feature type="signal peptide" evidence="3">
    <location>
        <begin position="1"/>
        <end position="18"/>
    </location>
</feature>
<feature type="propeptide" id="PRO_0000043290" evidence="4">
    <location>
        <begin position="19"/>
        <end position="125"/>
    </location>
</feature>
<feature type="chain" id="PRO_0000043291" description="Venom nerve growth factor 1">
    <location>
        <begin position="126"/>
        <end position="243"/>
    </location>
</feature>
<feature type="glycosylation site" description="N-linked (GlcNAc...) asparagine" evidence="3">
    <location>
        <position position="148"/>
    </location>
</feature>
<feature type="disulfide bond" evidence="1">
    <location>
        <begin position="139"/>
        <end position="204"/>
    </location>
</feature>
<feature type="disulfide bond" evidence="1">
    <location>
        <begin position="182"/>
        <end position="232"/>
    </location>
</feature>
<feature type="disulfide bond" evidence="1">
    <location>
        <begin position="192"/>
        <end position="234"/>
    </location>
</feature>
<evidence type="ECO:0000250" key="1">
    <source>
        <dbReference type="UniProtKB" id="P61898"/>
    </source>
</evidence>
<evidence type="ECO:0000250" key="2">
    <source>
        <dbReference type="UniProtKB" id="P61899"/>
    </source>
</evidence>
<evidence type="ECO:0000255" key="3"/>
<evidence type="ECO:0000269" key="4">
    <source>
    </source>
</evidence>
<evidence type="ECO:0000305" key="5"/>
<name>NGFV1_NAJSP</name>
<dbReference type="EMBL" id="AY527215">
    <property type="protein sequence ID" value="AAS94268.1"/>
    <property type="molecule type" value="mRNA"/>
</dbReference>
<dbReference type="SMR" id="Q5YF90"/>
<dbReference type="GO" id="GO:0030424">
    <property type="term" value="C:axon"/>
    <property type="evidence" value="ECO:0007669"/>
    <property type="project" value="TreeGrafter"/>
</dbReference>
<dbReference type="GO" id="GO:0030425">
    <property type="term" value="C:dendrite"/>
    <property type="evidence" value="ECO:0007669"/>
    <property type="project" value="TreeGrafter"/>
</dbReference>
<dbReference type="GO" id="GO:0005615">
    <property type="term" value="C:extracellular space"/>
    <property type="evidence" value="ECO:0007669"/>
    <property type="project" value="TreeGrafter"/>
</dbReference>
<dbReference type="GO" id="GO:0008021">
    <property type="term" value="C:synaptic vesicle"/>
    <property type="evidence" value="ECO:0007669"/>
    <property type="project" value="TreeGrafter"/>
</dbReference>
<dbReference type="GO" id="GO:0008083">
    <property type="term" value="F:growth factor activity"/>
    <property type="evidence" value="ECO:0007669"/>
    <property type="project" value="UniProtKB-KW"/>
</dbReference>
<dbReference type="GO" id="GO:0008289">
    <property type="term" value="F:lipid binding"/>
    <property type="evidence" value="ECO:0007669"/>
    <property type="project" value="UniProtKB-KW"/>
</dbReference>
<dbReference type="GO" id="GO:0008191">
    <property type="term" value="F:metalloendopeptidase inhibitor activity"/>
    <property type="evidence" value="ECO:0000250"/>
    <property type="project" value="UniProtKB"/>
</dbReference>
<dbReference type="GO" id="GO:0005163">
    <property type="term" value="F:nerve growth factor receptor binding"/>
    <property type="evidence" value="ECO:0007669"/>
    <property type="project" value="TreeGrafter"/>
</dbReference>
<dbReference type="GO" id="GO:0090729">
    <property type="term" value="F:toxin activity"/>
    <property type="evidence" value="ECO:0007669"/>
    <property type="project" value="UniProtKB-KW"/>
</dbReference>
<dbReference type="GO" id="GO:0007169">
    <property type="term" value="P:cell surface receptor protein tyrosine kinase signaling pathway"/>
    <property type="evidence" value="ECO:0007669"/>
    <property type="project" value="TreeGrafter"/>
</dbReference>
<dbReference type="GO" id="GO:0050804">
    <property type="term" value="P:modulation of chemical synaptic transmission"/>
    <property type="evidence" value="ECO:0007669"/>
    <property type="project" value="TreeGrafter"/>
</dbReference>
<dbReference type="GO" id="GO:0043524">
    <property type="term" value="P:negative regulation of neuron apoptotic process"/>
    <property type="evidence" value="ECO:0007669"/>
    <property type="project" value="TreeGrafter"/>
</dbReference>
<dbReference type="GO" id="GO:0021675">
    <property type="term" value="P:nerve development"/>
    <property type="evidence" value="ECO:0007669"/>
    <property type="project" value="TreeGrafter"/>
</dbReference>
<dbReference type="GO" id="GO:0038180">
    <property type="term" value="P:nerve growth factor signaling pathway"/>
    <property type="evidence" value="ECO:0007669"/>
    <property type="project" value="TreeGrafter"/>
</dbReference>
<dbReference type="GO" id="GO:0048812">
    <property type="term" value="P:neuron projection morphogenesis"/>
    <property type="evidence" value="ECO:0007669"/>
    <property type="project" value="TreeGrafter"/>
</dbReference>
<dbReference type="FunFam" id="2.10.90.10:FF:000002">
    <property type="entry name" value="Brain-derived neurotrophic factor"/>
    <property type="match status" value="1"/>
</dbReference>
<dbReference type="Gene3D" id="2.10.90.10">
    <property type="entry name" value="Cystine-knot cytokines"/>
    <property type="match status" value="1"/>
</dbReference>
<dbReference type="InterPro" id="IPR029034">
    <property type="entry name" value="Cystine-knot_cytokine"/>
</dbReference>
<dbReference type="InterPro" id="IPR020408">
    <property type="entry name" value="Nerve_growth_factor-like"/>
</dbReference>
<dbReference type="InterPro" id="IPR002072">
    <property type="entry name" value="Nerve_growth_factor-rel"/>
</dbReference>
<dbReference type="InterPro" id="IPR020425">
    <property type="entry name" value="Nerve_growth_factor_bsu"/>
</dbReference>
<dbReference type="InterPro" id="IPR019846">
    <property type="entry name" value="Nerve_growth_factor_CS"/>
</dbReference>
<dbReference type="InterPro" id="IPR020433">
    <property type="entry name" value="Venom_nerve_growth_factor"/>
</dbReference>
<dbReference type="PANTHER" id="PTHR11589:SF10">
    <property type="entry name" value="BETA-NERVE GROWTH FACTOR"/>
    <property type="match status" value="1"/>
</dbReference>
<dbReference type="PANTHER" id="PTHR11589">
    <property type="entry name" value="NERVE GROWTH FACTOR NGF -RELATED"/>
    <property type="match status" value="1"/>
</dbReference>
<dbReference type="Pfam" id="PF00243">
    <property type="entry name" value="NGF"/>
    <property type="match status" value="1"/>
</dbReference>
<dbReference type="PIRSF" id="PIRSF001789">
    <property type="entry name" value="NGF"/>
    <property type="match status" value="1"/>
</dbReference>
<dbReference type="PRINTS" id="PR00268">
    <property type="entry name" value="NGF"/>
</dbReference>
<dbReference type="PRINTS" id="PR01913">
    <property type="entry name" value="NGFBETA"/>
</dbReference>
<dbReference type="PRINTS" id="PR01917">
    <property type="entry name" value="VENOMNGF"/>
</dbReference>
<dbReference type="SMART" id="SM00140">
    <property type="entry name" value="NGF"/>
    <property type="match status" value="1"/>
</dbReference>
<dbReference type="SUPFAM" id="SSF57501">
    <property type="entry name" value="Cystine-knot cytokines"/>
    <property type="match status" value="1"/>
</dbReference>
<dbReference type="PROSITE" id="PS00248">
    <property type="entry name" value="NGF_1"/>
    <property type="match status" value="1"/>
</dbReference>
<dbReference type="PROSITE" id="PS50270">
    <property type="entry name" value="NGF_2"/>
    <property type="match status" value="1"/>
</dbReference>
<comment type="function">
    <text evidence="1 2">Nerve growth factor is important for the development and maintenance of the sympathetic and sensory nervous systems. It stimulates division and differentiation of sympathetic and embryonic sensory neurons as well as basal forebrain cholinergic neurons in the brain. Its relevance in the snake venom is not clear. However, it has been shown to inhibit metalloproteinase-dependent proteolysis of platelet glycoprotein Ib alpha, suggesting a metalloproteinase inhibition to prevent metalloprotease autodigestion and/or protection against prey proteases (By similarity). Binds a lipid between the two protein chains in the homodimer. The lipid-bound form promotes histamine relase from mouse mast cells, contrary to the lipid-free form (By similarity).</text>
</comment>
<comment type="subunit">
    <text evidence="1">Homodimer; non-covalently linked.</text>
</comment>
<comment type="subcellular location">
    <subcellularLocation>
        <location evidence="1">Secreted</location>
    </subcellularLocation>
</comment>
<comment type="tissue specificity">
    <text>Expressed by the venom gland.</text>
</comment>
<comment type="similarity">
    <text evidence="5">Belongs to the NGF-beta family.</text>
</comment>
<accession>Q5YF90</accession>
<proteinExistence type="evidence at protein level"/>
<sequence>MSMLCYTLIIAFLIGIWAVPKSEDNAPLGSPATSDLSDTSCAQTHEGLKTSRNTDQRHPAPRSQRIKQFGSASNIIVDPKLFQKRRFQSPRVLFSTQPPPLSRDEQSVEFLDNEDALNRNIRAKRETHPVHNRGEYSVCDSISVWVANKTTATDIKGKPVTVMVDVNLNNHVYKQYFFETKCRNPNPVPSGCRGIDSRHWNSYCTTTHTFVKALTMEGNRASWRFIRIDTACVCVISRKTENF</sequence>
<reference key="1">
    <citation type="journal article" date="2004" name="Biochem. J.">
        <title>Sputa nerve growth factor forms a preferable substitute to mouse 7S-beta nerve growth factor.</title>
        <authorList>
            <person name="Koh D.C.-I."/>
            <person name="Armugam A."/>
            <person name="Jeyaseelan K."/>
        </authorList>
    </citation>
    <scope>NUCLEOTIDE SEQUENCE [MRNA]</scope>
    <scope>PROTEIN SEQUENCE OF 126-138</scope>
    <source>
        <tissue>Venom</tissue>
        <tissue>Venom gland</tissue>
    </source>
</reference>
<protein>
    <recommendedName>
        <fullName>Venom nerve growth factor 1</fullName>
        <shortName>v-NGF-1</shortName>
        <shortName>vNGF-1</shortName>
    </recommendedName>
    <alternativeName>
        <fullName>Nerve growth factor I</fullName>
    </alternativeName>
</protein>